<organism>
    <name type="scientific">Stenotrophomonas maltophilia (strain R551-3)</name>
    <dbReference type="NCBI Taxonomy" id="391008"/>
    <lineage>
        <taxon>Bacteria</taxon>
        <taxon>Pseudomonadati</taxon>
        <taxon>Pseudomonadota</taxon>
        <taxon>Gammaproteobacteria</taxon>
        <taxon>Lysobacterales</taxon>
        <taxon>Lysobacteraceae</taxon>
        <taxon>Stenotrophomonas</taxon>
        <taxon>Stenotrophomonas maltophilia group</taxon>
    </lineage>
</organism>
<proteinExistence type="inferred from homology"/>
<keyword id="KW-0028">Amino-acid biosynthesis</keyword>
<keyword id="KW-0378">Hydrolase</keyword>
<keyword id="KW-0460">Magnesium</keyword>
<keyword id="KW-0479">Metal-binding</keyword>
<keyword id="KW-0486">Methionine biosynthesis</keyword>
<gene>
    <name evidence="1" type="primary">mtnC</name>
    <name type="ordered locus">Smal_1780</name>
</gene>
<name>MTNC_STRM5</name>
<comment type="function">
    <text evidence="1">Bifunctional enzyme that catalyzes the enolization of 2,3-diketo-5-methylthiopentyl-1-phosphate (DK-MTP-1-P) into the intermediate 2-hydroxy-3-keto-5-methylthiopentenyl-1-phosphate (HK-MTPenyl-1-P), which is then dephosphorylated to form the acireductone 1,2-dihydroxy-3-keto-5-methylthiopentene (DHK-MTPene).</text>
</comment>
<comment type="catalytic activity">
    <reaction evidence="1">
        <text>5-methylsulfanyl-2,3-dioxopentyl phosphate + H2O = 1,2-dihydroxy-5-(methylsulfanyl)pent-1-en-3-one + phosphate</text>
        <dbReference type="Rhea" id="RHEA:21700"/>
        <dbReference type="ChEBI" id="CHEBI:15377"/>
        <dbReference type="ChEBI" id="CHEBI:43474"/>
        <dbReference type="ChEBI" id="CHEBI:49252"/>
        <dbReference type="ChEBI" id="CHEBI:58828"/>
        <dbReference type="EC" id="3.1.3.77"/>
    </reaction>
</comment>
<comment type="cofactor">
    <cofactor evidence="1">
        <name>Mg(2+)</name>
        <dbReference type="ChEBI" id="CHEBI:18420"/>
    </cofactor>
    <text evidence="1">Binds 1 Mg(2+) ion per subunit.</text>
</comment>
<comment type="pathway">
    <text evidence="1">Amino-acid biosynthesis; L-methionine biosynthesis via salvage pathway; L-methionine from S-methyl-5-thio-alpha-D-ribose 1-phosphate: step 3/6.</text>
</comment>
<comment type="pathway">
    <text evidence="1">Amino-acid biosynthesis; L-methionine biosynthesis via salvage pathway; L-methionine from S-methyl-5-thio-alpha-D-ribose 1-phosphate: step 4/6.</text>
</comment>
<comment type="subunit">
    <text evidence="1">Monomer.</text>
</comment>
<comment type="similarity">
    <text evidence="1">Belongs to the HAD-like hydrolase superfamily. MasA/MtnC family.</text>
</comment>
<feature type="chain" id="PRO_0000357415" description="Enolase-phosphatase E1">
    <location>
        <begin position="1"/>
        <end position="231"/>
    </location>
</feature>
<protein>
    <recommendedName>
        <fullName evidence="1">Enolase-phosphatase E1</fullName>
        <ecNumber evidence="1">3.1.3.77</ecNumber>
    </recommendedName>
    <alternativeName>
        <fullName evidence="1">2,3-diketo-5-methylthio-1-phosphopentane phosphatase</fullName>
    </alternativeName>
</protein>
<accession>B4STR0</accession>
<dbReference type="EC" id="3.1.3.77" evidence="1"/>
<dbReference type="EMBL" id="CP001111">
    <property type="protein sequence ID" value="ACF51484.1"/>
    <property type="molecule type" value="Genomic_DNA"/>
</dbReference>
<dbReference type="RefSeq" id="WP_012510902.1">
    <property type="nucleotide sequence ID" value="NC_011071.1"/>
</dbReference>
<dbReference type="SMR" id="B4STR0"/>
<dbReference type="STRING" id="391008.Smal_1780"/>
<dbReference type="KEGG" id="smt:Smal_1780"/>
<dbReference type="eggNOG" id="COG4229">
    <property type="taxonomic scope" value="Bacteria"/>
</dbReference>
<dbReference type="HOGENOM" id="CLU_023273_0_0_6"/>
<dbReference type="OrthoDB" id="9797416at2"/>
<dbReference type="UniPathway" id="UPA00904">
    <property type="reaction ID" value="UER00876"/>
</dbReference>
<dbReference type="UniPathway" id="UPA00904">
    <property type="reaction ID" value="UER00877"/>
</dbReference>
<dbReference type="Proteomes" id="UP000001867">
    <property type="component" value="Chromosome"/>
</dbReference>
<dbReference type="GO" id="GO:0043715">
    <property type="term" value="F:2,3-diketo-5-methylthiopentyl-1-phosphate enolase activity"/>
    <property type="evidence" value="ECO:0007669"/>
    <property type="project" value="UniProtKB-UniRule"/>
</dbReference>
<dbReference type="GO" id="GO:0043716">
    <property type="term" value="F:2-hydroxy-3-keto-5-methylthiopentenyl-1-phosphate phosphatase activity"/>
    <property type="evidence" value="ECO:0007669"/>
    <property type="project" value="UniProtKB-UniRule"/>
</dbReference>
<dbReference type="GO" id="GO:0043874">
    <property type="term" value="F:acireductone synthase activity"/>
    <property type="evidence" value="ECO:0007669"/>
    <property type="project" value="UniProtKB-EC"/>
</dbReference>
<dbReference type="GO" id="GO:0000287">
    <property type="term" value="F:magnesium ion binding"/>
    <property type="evidence" value="ECO:0007669"/>
    <property type="project" value="UniProtKB-UniRule"/>
</dbReference>
<dbReference type="GO" id="GO:0019509">
    <property type="term" value="P:L-methionine salvage from methylthioadenosine"/>
    <property type="evidence" value="ECO:0007669"/>
    <property type="project" value="UniProtKB-UniRule"/>
</dbReference>
<dbReference type="CDD" id="cd01629">
    <property type="entry name" value="HAD_EP"/>
    <property type="match status" value="1"/>
</dbReference>
<dbReference type="Gene3D" id="1.10.720.60">
    <property type="match status" value="1"/>
</dbReference>
<dbReference type="Gene3D" id="3.40.50.1000">
    <property type="entry name" value="HAD superfamily/HAD-like"/>
    <property type="match status" value="1"/>
</dbReference>
<dbReference type="HAMAP" id="MF_01681">
    <property type="entry name" value="Salvage_MtnC"/>
    <property type="match status" value="1"/>
</dbReference>
<dbReference type="InterPro" id="IPR023943">
    <property type="entry name" value="Enolase-ppase_E1"/>
</dbReference>
<dbReference type="InterPro" id="IPR036412">
    <property type="entry name" value="HAD-like_sf"/>
</dbReference>
<dbReference type="InterPro" id="IPR006439">
    <property type="entry name" value="HAD-SF_hydro_IA"/>
</dbReference>
<dbReference type="InterPro" id="IPR023214">
    <property type="entry name" value="HAD_sf"/>
</dbReference>
<dbReference type="NCBIfam" id="TIGR01691">
    <property type="entry name" value="enolase-ppase"/>
    <property type="match status" value="1"/>
</dbReference>
<dbReference type="NCBIfam" id="TIGR01549">
    <property type="entry name" value="HAD-SF-IA-v1"/>
    <property type="match status" value="1"/>
</dbReference>
<dbReference type="PANTHER" id="PTHR20371">
    <property type="entry name" value="ENOLASE-PHOSPHATASE E1"/>
    <property type="match status" value="1"/>
</dbReference>
<dbReference type="PANTHER" id="PTHR20371:SF1">
    <property type="entry name" value="ENOLASE-PHOSPHATASE E1"/>
    <property type="match status" value="1"/>
</dbReference>
<dbReference type="Pfam" id="PF00702">
    <property type="entry name" value="Hydrolase"/>
    <property type="match status" value="1"/>
</dbReference>
<dbReference type="SFLD" id="SFLDG01129">
    <property type="entry name" value="C1.5:_HAD__Beta-PGM__Phosphata"/>
    <property type="match status" value="1"/>
</dbReference>
<dbReference type="SFLD" id="SFLDF00044">
    <property type="entry name" value="enolase-phosphatase"/>
    <property type="match status" value="1"/>
</dbReference>
<dbReference type="SUPFAM" id="SSF56784">
    <property type="entry name" value="HAD-like"/>
    <property type="match status" value="1"/>
</dbReference>
<reference key="1">
    <citation type="submission" date="2008-06" db="EMBL/GenBank/DDBJ databases">
        <title>Complete sequence of Stenotrophomonas maltophilia R551-3.</title>
        <authorList>
            <consortium name="US DOE Joint Genome Institute"/>
            <person name="Lucas S."/>
            <person name="Copeland A."/>
            <person name="Lapidus A."/>
            <person name="Glavina del Rio T."/>
            <person name="Dalin E."/>
            <person name="Tice H."/>
            <person name="Pitluck S."/>
            <person name="Chain P."/>
            <person name="Malfatti S."/>
            <person name="Shin M."/>
            <person name="Vergez L."/>
            <person name="Lang D."/>
            <person name="Schmutz J."/>
            <person name="Larimer F."/>
            <person name="Land M."/>
            <person name="Hauser L."/>
            <person name="Kyrpides N."/>
            <person name="Mikhailova N."/>
            <person name="Taghavi S."/>
            <person name="Monchy S."/>
            <person name="Newman L."/>
            <person name="Vangronsveld J."/>
            <person name="van der Lelie D."/>
            <person name="Richardson P."/>
        </authorList>
    </citation>
    <scope>NUCLEOTIDE SEQUENCE [LARGE SCALE GENOMIC DNA]</scope>
    <source>
        <strain>R551-3</strain>
    </source>
</reference>
<evidence type="ECO:0000255" key="1">
    <source>
        <dbReference type="HAMAP-Rule" id="MF_01681"/>
    </source>
</evidence>
<sequence>MQPRVILTDIEGTTSSISFVKNVLFPYARKALPAFVAEHGQQPEVRRWLDAVATEIGGACQDSLVAETLQGWIDQDRKHTALKALQGLIWDEGYRRGDYTAHFYPEVAPVLKGWHASGLPLYVYSSGSVPAQKLFFGFSDAGDLSPLVSGWFDTEIGGKREADSYRRIVQAIDVPAGEILFLSDVVEELDAAREAGLQTRLIDRLDDYPLPRTGQAANGHERVENFQQIQL</sequence>